<feature type="chain" id="PRO_0000364923" description="Ferredoxin--NADP reductase">
    <location>
        <begin position="1"/>
        <end position="337"/>
    </location>
</feature>
<feature type="binding site" evidence="1">
    <location>
        <position position="33"/>
    </location>
    <ligand>
        <name>FAD</name>
        <dbReference type="ChEBI" id="CHEBI:57692"/>
    </ligand>
</feature>
<feature type="binding site" evidence="1">
    <location>
        <position position="41"/>
    </location>
    <ligand>
        <name>FAD</name>
        <dbReference type="ChEBI" id="CHEBI:57692"/>
    </ligand>
</feature>
<feature type="binding site" evidence="1">
    <location>
        <position position="46"/>
    </location>
    <ligand>
        <name>FAD</name>
        <dbReference type="ChEBI" id="CHEBI:57692"/>
    </ligand>
</feature>
<feature type="binding site" evidence="1">
    <location>
        <position position="86"/>
    </location>
    <ligand>
        <name>FAD</name>
        <dbReference type="ChEBI" id="CHEBI:57692"/>
    </ligand>
</feature>
<feature type="binding site" evidence="1">
    <location>
        <position position="120"/>
    </location>
    <ligand>
        <name>FAD</name>
        <dbReference type="ChEBI" id="CHEBI:57692"/>
    </ligand>
</feature>
<feature type="binding site" evidence="1">
    <location>
        <position position="286"/>
    </location>
    <ligand>
        <name>FAD</name>
        <dbReference type="ChEBI" id="CHEBI:57692"/>
    </ligand>
</feature>
<feature type="binding site" evidence="1">
    <location>
        <position position="327"/>
    </location>
    <ligand>
        <name>FAD</name>
        <dbReference type="ChEBI" id="CHEBI:57692"/>
    </ligand>
</feature>
<sequence>MYNTDVVIIGAGPVGLFAVFQAGMFGMKCHVIDAQETIGGQCITLYPEKPIYDIPAYPKIVAEELIKQLELQAAPFKPVYHLNQQAIELNKQGDFFEIKTSKNTLIKSKIIIIAAGAGSFGPNKPPLANIEDFEGKSVFYFINDKNKFTGKNIVIAGGGDSAVDWAISLSEIANKIYLVHRRDKFTASPESVRQLRNLAETGKIELVIGYQLNALDGNNGELQSVIVRDLQNNTHKLEANILLPFFGLKQNLGSLANWGLNVKLQHIEVDNSYYQTNIEGIYAIGDIAHYTGKLKLILIGFAEAASSLHHAYSRVFDGKALHFEYSTTKYGKNGKKK</sequence>
<organism>
    <name type="scientific">Rickettsia canadensis (strain McKiel)</name>
    <dbReference type="NCBI Taxonomy" id="293613"/>
    <lineage>
        <taxon>Bacteria</taxon>
        <taxon>Pseudomonadati</taxon>
        <taxon>Pseudomonadota</taxon>
        <taxon>Alphaproteobacteria</taxon>
        <taxon>Rickettsiales</taxon>
        <taxon>Rickettsiaceae</taxon>
        <taxon>Rickettsieae</taxon>
        <taxon>Rickettsia</taxon>
        <taxon>belli group</taxon>
    </lineage>
</organism>
<evidence type="ECO:0000255" key="1">
    <source>
        <dbReference type="HAMAP-Rule" id="MF_01685"/>
    </source>
</evidence>
<dbReference type="EC" id="1.18.1.2" evidence="1"/>
<dbReference type="EMBL" id="CP000409">
    <property type="protein sequence ID" value="ABV73537.1"/>
    <property type="molecule type" value="Genomic_DNA"/>
</dbReference>
<dbReference type="RefSeq" id="WP_012148734.1">
    <property type="nucleotide sequence ID" value="NC_009879.1"/>
</dbReference>
<dbReference type="SMR" id="A8EYV4"/>
<dbReference type="STRING" id="293613.A1E_02985"/>
<dbReference type="KEGG" id="rcm:A1E_02985"/>
<dbReference type="eggNOG" id="COG0492">
    <property type="taxonomic scope" value="Bacteria"/>
</dbReference>
<dbReference type="HOGENOM" id="CLU_031864_5_5_5"/>
<dbReference type="Proteomes" id="UP000007056">
    <property type="component" value="Chromosome"/>
</dbReference>
<dbReference type="GO" id="GO:0004324">
    <property type="term" value="F:ferredoxin-NADP+ reductase activity"/>
    <property type="evidence" value="ECO:0007669"/>
    <property type="project" value="UniProtKB-UniRule"/>
</dbReference>
<dbReference type="GO" id="GO:0050660">
    <property type="term" value="F:flavin adenine dinucleotide binding"/>
    <property type="evidence" value="ECO:0007669"/>
    <property type="project" value="UniProtKB-UniRule"/>
</dbReference>
<dbReference type="GO" id="GO:0050661">
    <property type="term" value="F:NADP binding"/>
    <property type="evidence" value="ECO:0007669"/>
    <property type="project" value="UniProtKB-UniRule"/>
</dbReference>
<dbReference type="Gene3D" id="3.50.50.60">
    <property type="entry name" value="FAD/NAD(P)-binding domain"/>
    <property type="match status" value="2"/>
</dbReference>
<dbReference type="HAMAP" id="MF_01685">
    <property type="entry name" value="FENR2"/>
    <property type="match status" value="1"/>
</dbReference>
<dbReference type="InterPro" id="IPR036188">
    <property type="entry name" value="FAD/NAD-bd_sf"/>
</dbReference>
<dbReference type="InterPro" id="IPR023753">
    <property type="entry name" value="FAD/NAD-binding_dom"/>
</dbReference>
<dbReference type="InterPro" id="IPR022890">
    <property type="entry name" value="Fd--NADP_Rdtase_type_2"/>
</dbReference>
<dbReference type="InterPro" id="IPR050097">
    <property type="entry name" value="Ferredoxin-NADP_redctase_2"/>
</dbReference>
<dbReference type="PANTHER" id="PTHR48105">
    <property type="entry name" value="THIOREDOXIN REDUCTASE 1-RELATED-RELATED"/>
    <property type="match status" value="1"/>
</dbReference>
<dbReference type="Pfam" id="PF07992">
    <property type="entry name" value="Pyr_redox_2"/>
    <property type="match status" value="1"/>
</dbReference>
<dbReference type="PRINTS" id="PR00368">
    <property type="entry name" value="FADPNR"/>
</dbReference>
<dbReference type="PRINTS" id="PR00469">
    <property type="entry name" value="PNDRDTASEII"/>
</dbReference>
<dbReference type="SUPFAM" id="SSF51905">
    <property type="entry name" value="FAD/NAD(P)-binding domain"/>
    <property type="match status" value="1"/>
</dbReference>
<proteinExistence type="inferred from homology"/>
<name>FENR_RICCK</name>
<protein>
    <recommendedName>
        <fullName evidence="1">Ferredoxin--NADP reductase</fullName>
        <shortName evidence="1">FNR</shortName>
        <shortName evidence="1">Fd-NADP(+) reductase</shortName>
        <ecNumber evidence="1">1.18.1.2</ecNumber>
    </recommendedName>
</protein>
<keyword id="KW-0274">FAD</keyword>
<keyword id="KW-0285">Flavoprotein</keyword>
<keyword id="KW-0521">NADP</keyword>
<keyword id="KW-0560">Oxidoreductase</keyword>
<gene>
    <name type="ordered locus">A1E_02985</name>
</gene>
<comment type="catalytic activity">
    <reaction evidence="1">
        <text>2 reduced [2Fe-2S]-[ferredoxin] + NADP(+) + H(+) = 2 oxidized [2Fe-2S]-[ferredoxin] + NADPH</text>
        <dbReference type="Rhea" id="RHEA:20125"/>
        <dbReference type="Rhea" id="RHEA-COMP:10000"/>
        <dbReference type="Rhea" id="RHEA-COMP:10001"/>
        <dbReference type="ChEBI" id="CHEBI:15378"/>
        <dbReference type="ChEBI" id="CHEBI:33737"/>
        <dbReference type="ChEBI" id="CHEBI:33738"/>
        <dbReference type="ChEBI" id="CHEBI:57783"/>
        <dbReference type="ChEBI" id="CHEBI:58349"/>
        <dbReference type="EC" id="1.18.1.2"/>
    </reaction>
</comment>
<comment type="cofactor">
    <cofactor evidence="1">
        <name>FAD</name>
        <dbReference type="ChEBI" id="CHEBI:57692"/>
    </cofactor>
    <text evidence="1">Binds 1 FAD per subunit.</text>
</comment>
<comment type="subunit">
    <text evidence="1">Homodimer.</text>
</comment>
<comment type="similarity">
    <text evidence="1">Belongs to the ferredoxin--NADP reductase type 2 family.</text>
</comment>
<reference key="1">
    <citation type="submission" date="2007-09" db="EMBL/GenBank/DDBJ databases">
        <title>Complete genome sequence of Rickettsia canadensis.</title>
        <authorList>
            <person name="Madan A."/>
            <person name="Fahey J."/>
            <person name="Helton E."/>
            <person name="Ketteman M."/>
            <person name="Madan A."/>
            <person name="Rodrigues S."/>
            <person name="Sanchez A."/>
            <person name="Whiting M."/>
            <person name="Dasch G."/>
            <person name="Eremeeva M."/>
        </authorList>
    </citation>
    <scope>NUCLEOTIDE SEQUENCE [LARGE SCALE GENOMIC DNA]</scope>
    <source>
        <strain>McKiel</strain>
    </source>
</reference>
<accession>A8EYV4</accession>